<comment type="function">
    <text evidence="1">Essential cell division protein that stabilizes the FtsZ protofilaments by cross-linking them and that serves as a cytoplasmic membrane anchor for the Z ring. Also required for the recruitment to the septal ring of downstream cell division proteins.</text>
</comment>
<comment type="subunit">
    <text evidence="1">Interacts with FtsZ via their C-terminal domains.</text>
</comment>
<comment type="subcellular location">
    <subcellularLocation>
        <location evidence="1">Cell inner membrane</location>
        <topology evidence="1">Single-pass type I membrane protein</topology>
    </subcellularLocation>
    <text evidence="1">Localizes to the Z ring in an FtsZ-dependent manner.</text>
</comment>
<comment type="similarity">
    <text evidence="1">Belongs to the ZipA family.</text>
</comment>
<keyword id="KW-0131">Cell cycle</keyword>
<keyword id="KW-0132">Cell division</keyword>
<keyword id="KW-0997">Cell inner membrane</keyword>
<keyword id="KW-1003">Cell membrane</keyword>
<keyword id="KW-0472">Membrane</keyword>
<keyword id="KW-1185">Reference proteome</keyword>
<keyword id="KW-0812">Transmembrane</keyword>
<keyword id="KW-1133">Transmembrane helix</keyword>
<dbReference type="EMBL" id="AE004091">
    <property type="protein sequence ID" value="AAG04917.1"/>
    <property type="molecule type" value="Genomic_DNA"/>
</dbReference>
<dbReference type="PIR" id="E83454">
    <property type="entry name" value="E83454"/>
</dbReference>
<dbReference type="RefSeq" id="NP_250219.1">
    <property type="nucleotide sequence ID" value="NC_002516.2"/>
</dbReference>
<dbReference type="RefSeq" id="WP_003083352.1">
    <property type="nucleotide sequence ID" value="NZ_QZGE01000032.1"/>
</dbReference>
<dbReference type="SMR" id="Q9I3I5"/>
<dbReference type="STRING" id="208964.PA1528"/>
<dbReference type="PaxDb" id="208964-PA1528"/>
<dbReference type="GeneID" id="879535"/>
<dbReference type="KEGG" id="pae:PA1528"/>
<dbReference type="PATRIC" id="fig|208964.12.peg.1581"/>
<dbReference type="PseudoCAP" id="PA1528"/>
<dbReference type="HOGENOM" id="CLU_030174_0_1_6"/>
<dbReference type="InParanoid" id="Q9I3I5"/>
<dbReference type="OrthoDB" id="7054914at2"/>
<dbReference type="PhylomeDB" id="Q9I3I5"/>
<dbReference type="BioCyc" id="PAER208964:G1FZ6-1555-MONOMER"/>
<dbReference type="Proteomes" id="UP000002438">
    <property type="component" value="Chromosome"/>
</dbReference>
<dbReference type="GO" id="GO:0032153">
    <property type="term" value="C:cell division site"/>
    <property type="evidence" value="ECO:0000318"/>
    <property type="project" value="GO_Central"/>
</dbReference>
<dbReference type="GO" id="GO:0005886">
    <property type="term" value="C:plasma membrane"/>
    <property type="evidence" value="ECO:0000318"/>
    <property type="project" value="GO_Central"/>
</dbReference>
<dbReference type="GO" id="GO:0000917">
    <property type="term" value="P:division septum assembly"/>
    <property type="evidence" value="ECO:0000318"/>
    <property type="project" value="GO_Central"/>
</dbReference>
<dbReference type="GO" id="GO:0043093">
    <property type="term" value="P:FtsZ-dependent cytokinesis"/>
    <property type="evidence" value="ECO:0007669"/>
    <property type="project" value="UniProtKB-UniRule"/>
</dbReference>
<dbReference type="CDD" id="cd00231">
    <property type="entry name" value="ZipA"/>
    <property type="match status" value="1"/>
</dbReference>
<dbReference type="FunFam" id="3.30.1400.10:FF:000002">
    <property type="entry name" value="Cell division protein ZipA"/>
    <property type="match status" value="1"/>
</dbReference>
<dbReference type="Gene3D" id="3.30.1400.10">
    <property type="entry name" value="ZipA, C-terminal FtsZ-binding domain"/>
    <property type="match status" value="1"/>
</dbReference>
<dbReference type="HAMAP" id="MF_00509">
    <property type="entry name" value="ZipA"/>
    <property type="match status" value="1"/>
</dbReference>
<dbReference type="InterPro" id="IPR011919">
    <property type="entry name" value="Cell_div_ZipA"/>
</dbReference>
<dbReference type="InterPro" id="IPR007449">
    <property type="entry name" value="ZipA_FtsZ-bd_C"/>
</dbReference>
<dbReference type="InterPro" id="IPR036765">
    <property type="entry name" value="ZipA_FtsZ-bd_C_sf"/>
</dbReference>
<dbReference type="NCBIfam" id="TIGR02205">
    <property type="entry name" value="septum_zipA"/>
    <property type="match status" value="1"/>
</dbReference>
<dbReference type="PANTHER" id="PTHR38685">
    <property type="entry name" value="CELL DIVISION PROTEIN ZIPA"/>
    <property type="match status" value="1"/>
</dbReference>
<dbReference type="PANTHER" id="PTHR38685:SF1">
    <property type="entry name" value="CELL DIVISION PROTEIN ZIPA"/>
    <property type="match status" value="1"/>
</dbReference>
<dbReference type="Pfam" id="PF04354">
    <property type="entry name" value="ZipA_C"/>
    <property type="match status" value="1"/>
</dbReference>
<dbReference type="SMART" id="SM00771">
    <property type="entry name" value="ZipA_C"/>
    <property type="match status" value="1"/>
</dbReference>
<dbReference type="SUPFAM" id="SSF64383">
    <property type="entry name" value="Cell-division protein ZipA, C-terminal domain"/>
    <property type="match status" value="1"/>
</dbReference>
<accession>Q9I3I5</accession>
<gene>
    <name evidence="1" type="primary">zipA</name>
    <name type="ordered locus">PA1528</name>
</gene>
<reference key="1">
    <citation type="journal article" date="2000" name="Nature">
        <title>Complete genome sequence of Pseudomonas aeruginosa PAO1, an opportunistic pathogen.</title>
        <authorList>
            <person name="Stover C.K."/>
            <person name="Pham X.-Q.T."/>
            <person name="Erwin A.L."/>
            <person name="Mizoguchi S.D."/>
            <person name="Warrener P."/>
            <person name="Hickey M.J."/>
            <person name="Brinkman F.S.L."/>
            <person name="Hufnagle W.O."/>
            <person name="Kowalik D.J."/>
            <person name="Lagrou M."/>
            <person name="Garber R.L."/>
            <person name="Goltry L."/>
            <person name="Tolentino E."/>
            <person name="Westbrock-Wadman S."/>
            <person name="Yuan Y."/>
            <person name="Brody L.L."/>
            <person name="Coulter S.N."/>
            <person name="Folger K.R."/>
            <person name="Kas A."/>
            <person name="Larbig K."/>
            <person name="Lim R.M."/>
            <person name="Smith K.A."/>
            <person name="Spencer D.H."/>
            <person name="Wong G.K.-S."/>
            <person name="Wu Z."/>
            <person name="Paulsen I.T."/>
            <person name="Reizer J."/>
            <person name="Saier M.H. Jr."/>
            <person name="Hancock R.E.W."/>
            <person name="Lory S."/>
            <person name="Olson M.V."/>
        </authorList>
    </citation>
    <scope>NUCLEOTIDE SEQUENCE [LARGE SCALE GENOMIC DNA]</scope>
    <source>
        <strain>ATCC 15692 / DSM 22644 / CIP 104116 / JCM 14847 / LMG 12228 / 1C / PRS 101 / PAO1</strain>
    </source>
</reference>
<feature type="chain" id="PRO_0000214531" description="Cell division protein ZipA">
    <location>
        <begin position="1"/>
        <end position="289"/>
    </location>
</feature>
<feature type="topological domain" description="Periplasmic" evidence="1">
    <location>
        <position position="1"/>
    </location>
</feature>
<feature type="transmembrane region" description="Helical" evidence="1">
    <location>
        <begin position="2"/>
        <end position="22"/>
    </location>
</feature>
<feature type="topological domain" description="Cytoplasmic" evidence="1">
    <location>
        <begin position="23"/>
        <end position="289"/>
    </location>
</feature>
<feature type="region of interest" description="Disordered" evidence="2">
    <location>
        <begin position="66"/>
        <end position="141"/>
    </location>
</feature>
<feature type="compositionally biased region" description="Basic and acidic residues" evidence="2">
    <location>
        <begin position="81"/>
        <end position="99"/>
    </location>
</feature>
<feature type="compositionally biased region" description="Acidic residues" evidence="2">
    <location>
        <begin position="100"/>
        <end position="114"/>
    </location>
</feature>
<evidence type="ECO:0000255" key="1">
    <source>
        <dbReference type="HAMAP-Rule" id="MF_00509"/>
    </source>
</evidence>
<evidence type="ECO:0000256" key="2">
    <source>
        <dbReference type="SAM" id="MobiDB-lite"/>
    </source>
</evidence>
<proteinExistence type="inferred from homology"/>
<sequence length="289" mass="32237">MDIGLREWLIVIGLIVIAGILFDGWRRMRGGKGKLKFKLDRSFANLPDDDGDSAELLGPARVVEHREPSFDEQDLPSVSAREAKERKGGKRQEEPRQGDLDLDEGLALEADPSDAAETVEPRKGKSKGRKEKEREKAPAVAAEPAPVDEVLIINVIARDESGFKGPALLQNILESGLRFGDMDIFHRHESMAGNGEILFSMANAVKPGTFDLDDIDNFSTRAVSFFLGLPGPRHPKQAFDVMVAAARKLAHELNGELKDEQRSVLTAQTIEHYRQRIIDHERRSLMQKR</sequence>
<organism>
    <name type="scientific">Pseudomonas aeruginosa (strain ATCC 15692 / DSM 22644 / CIP 104116 / JCM 14847 / LMG 12228 / 1C / PRS 101 / PAO1)</name>
    <dbReference type="NCBI Taxonomy" id="208964"/>
    <lineage>
        <taxon>Bacteria</taxon>
        <taxon>Pseudomonadati</taxon>
        <taxon>Pseudomonadota</taxon>
        <taxon>Gammaproteobacteria</taxon>
        <taxon>Pseudomonadales</taxon>
        <taxon>Pseudomonadaceae</taxon>
        <taxon>Pseudomonas</taxon>
    </lineage>
</organism>
<protein>
    <recommendedName>
        <fullName evidence="1">Cell division protein ZipA</fullName>
    </recommendedName>
</protein>
<name>ZIPA_PSEAE</name>